<keyword id="KW-0378">Hydrolase</keyword>
<keyword id="KW-1185">Reference proteome</keyword>
<proteinExistence type="inferred from homology"/>
<feature type="chain" id="PRO_0000231942" description="RNA pyrophosphohydrolase">
    <location>
        <begin position="1"/>
        <end position="170"/>
    </location>
</feature>
<feature type="domain" description="Nudix hydrolase" evidence="1">
    <location>
        <begin position="6"/>
        <end position="149"/>
    </location>
</feature>
<feature type="short sequence motif" description="Nudix box">
    <location>
        <begin position="38"/>
        <end position="59"/>
    </location>
</feature>
<evidence type="ECO:0000255" key="1">
    <source>
        <dbReference type="HAMAP-Rule" id="MF_00298"/>
    </source>
</evidence>
<organism>
    <name type="scientific">Aliivibrio fischeri (strain ATCC 700601 / ES114)</name>
    <name type="common">Vibrio fischeri</name>
    <dbReference type="NCBI Taxonomy" id="312309"/>
    <lineage>
        <taxon>Bacteria</taxon>
        <taxon>Pseudomonadati</taxon>
        <taxon>Pseudomonadota</taxon>
        <taxon>Gammaproteobacteria</taxon>
        <taxon>Vibrionales</taxon>
        <taxon>Vibrionaceae</taxon>
        <taxon>Aliivibrio</taxon>
    </lineage>
</organism>
<accession>Q5E7P5</accession>
<gene>
    <name evidence="1" type="primary">rppH</name>
    <name evidence="1" type="synonym">nudH</name>
    <name type="ordered locus">VF_0456</name>
</gene>
<reference key="1">
    <citation type="journal article" date="2005" name="Proc. Natl. Acad. Sci. U.S.A.">
        <title>Complete genome sequence of Vibrio fischeri: a symbiotic bacterium with pathogenic congeners.</title>
        <authorList>
            <person name="Ruby E.G."/>
            <person name="Urbanowski M."/>
            <person name="Campbell J."/>
            <person name="Dunn A."/>
            <person name="Faini M."/>
            <person name="Gunsalus R."/>
            <person name="Lostroh P."/>
            <person name="Lupp C."/>
            <person name="McCann J."/>
            <person name="Millikan D."/>
            <person name="Schaefer A."/>
            <person name="Stabb E."/>
            <person name="Stevens A."/>
            <person name="Visick K."/>
            <person name="Whistler C."/>
            <person name="Greenberg E.P."/>
        </authorList>
    </citation>
    <scope>NUCLEOTIDE SEQUENCE [LARGE SCALE GENOMIC DNA]</scope>
    <source>
        <strain>ATCC 700601 / ES114</strain>
    </source>
</reference>
<comment type="function">
    <text evidence="1">Accelerates the degradation of transcripts by removing pyrophosphate from the 5'-end of triphosphorylated RNA, leading to a more labile monophosphorylated state that can stimulate subsequent ribonuclease cleavage.</text>
</comment>
<comment type="cofactor">
    <cofactor evidence="1">
        <name>a divalent metal cation</name>
        <dbReference type="ChEBI" id="CHEBI:60240"/>
    </cofactor>
</comment>
<comment type="similarity">
    <text evidence="1">Belongs to the Nudix hydrolase family. RppH subfamily.</text>
</comment>
<dbReference type="EC" id="3.6.1.-" evidence="1"/>
<dbReference type="EMBL" id="CP000020">
    <property type="protein sequence ID" value="AAW84951.1"/>
    <property type="molecule type" value="Genomic_DNA"/>
</dbReference>
<dbReference type="RefSeq" id="WP_005417607.1">
    <property type="nucleotide sequence ID" value="NZ_CAWLES010000001.1"/>
</dbReference>
<dbReference type="RefSeq" id="YP_203839.1">
    <property type="nucleotide sequence ID" value="NC_006840.2"/>
</dbReference>
<dbReference type="SMR" id="Q5E7P5"/>
<dbReference type="STRING" id="312309.VF_0456"/>
<dbReference type="EnsemblBacteria" id="AAW84951">
    <property type="protein sequence ID" value="AAW84951"/>
    <property type="gene ID" value="VF_0456"/>
</dbReference>
<dbReference type="GeneID" id="54163092"/>
<dbReference type="KEGG" id="vfi:VF_0456"/>
<dbReference type="PATRIC" id="fig|312309.11.peg.446"/>
<dbReference type="eggNOG" id="COG0494">
    <property type="taxonomic scope" value="Bacteria"/>
</dbReference>
<dbReference type="HOGENOM" id="CLU_087195_3_2_6"/>
<dbReference type="OrthoDB" id="9816040at2"/>
<dbReference type="PRO" id="PR:Q5E7P5"/>
<dbReference type="Proteomes" id="UP000000537">
    <property type="component" value="Chromosome I"/>
</dbReference>
<dbReference type="GO" id="GO:0005737">
    <property type="term" value="C:cytoplasm"/>
    <property type="evidence" value="ECO:0007669"/>
    <property type="project" value="TreeGrafter"/>
</dbReference>
<dbReference type="GO" id="GO:0034353">
    <property type="term" value="F:mRNA 5'-diphosphatase activity"/>
    <property type="evidence" value="ECO:0007669"/>
    <property type="project" value="TreeGrafter"/>
</dbReference>
<dbReference type="GO" id="GO:0006402">
    <property type="term" value="P:mRNA catabolic process"/>
    <property type="evidence" value="ECO:0007669"/>
    <property type="project" value="TreeGrafter"/>
</dbReference>
<dbReference type="CDD" id="cd03671">
    <property type="entry name" value="NUDIX_Ap4A_hydrolase_plant_like"/>
    <property type="match status" value="1"/>
</dbReference>
<dbReference type="FunFam" id="3.90.79.10:FF:000001">
    <property type="entry name" value="RNA pyrophosphohydrolase"/>
    <property type="match status" value="1"/>
</dbReference>
<dbReference type="Gene3D" id="3.90.79.10">
    <property type="entry name" value="Nucleoside Triphosphate Pyrophosphohydrolase"/>
    <property type="match status" value="1"/>
</dbReference>
<dbReference type="HAMAP" id="MF_00298">
    <property type="entry name" value="Nudix_RppH"/>
    <property type="match status" value="1"/>
</dbReference>
<dbReference type="InterPro" id="IPR020476">
    <property type="entry name" value="Nudix_hydrolase"/>
</dbReference>
<dbReference type="InterPro" id="IPR015797">
    <property type="entry name" value="NUDIX_hydrolase-like_dom_sf"/>
</dbReference>
<dbReference type="InterPro" id="IPR020084">
    <property type="entry name" value="NUDIX_hydrolase_CS"/>
</dbReference>
<dbReference type="InterPro" id="IPR000086">
    <property type="entry name" value="NUDIX_hydrolase_dom"/>
</dbReference>
<dbReference type="InterPro" id="IPR022927">
    <property type="entry name" value="RppH"/>
</dbReference>
<dbReference type="NCBIfam" id="NF001934">
    <property type="entry name" value="PRK00714.1-1"/>
    <property type="match status" value="1"/>
</dbReference>
<dbReference type="NCBIfam" id="NF001936">
    <property type="entry name" value="PRK00714.1-3"/>
    <property type="match status" value="1"/>
</dbReference>
<dbReference type="NCBIfam" id="NF001937">
    <property type="entry name" value="PRK00714.1-4"/>
    <property type="match status" value="1"/>
</dbReference>
<dbReference type="NCBIfam" id="NF001938">
    <property type="entry name" value="PRK00714.1-5"/>
    <property type="match status" value="1"/>
</dbReference>
<dbReference type="PANTHER" id="PTHR23114">
    <property type="entry name" value="M7GPPPN-MRNA HYDROLASE"/>
    <property type="match status" value="1"/>
</dbReference>
<dbReference type="PANTHER" id="PTHR23114:SF17">
    <property type="entry name" value="M7GPPPN-MRNA HYDROLASE"/>
    <property type="match status" value="1"/>
</dbReference>
<dbReference type="Pfam" id="PF00293">
    <property type="entry name" value="NUDIX"/>
    <property type="match status" value="1"/>
</dbReference>
<dbReference type="PRINTS" id="PR00502">
    <property type="entry name" value="NUDIXFAMILY"/>
</dbReference>
<dbReference type="SUPFAM" id="SSF55811">
    <property type="entry name" value="Nudix"/>
    <property type="match status" value="1"/>
</dbReference>
<dbReference type="PROSITE" id="PS51462">
    <property type="entry name" value="NUDIX"/>
    <property type="match status" value="1"/>
</dbReference>
<dbReference type="PROSITE" id="PS00893">
    <property type="entry name" value="NUDIX_BOX"/>
    <property type="match status" value="1"/>
</dbReference>
<sequence>MIDGDGFRPNVGIVICNSHGQVFWAKRYGQHSWQFPQGGIDDGETPEQAMYRELYEEVGLTKNDVRILASSRHWLRYKLPKRLVRWDSKPVCIGQKQKWFLLRLECDESKVNMQRDRSPEFDGWRWVSYWYPVRQVVSFKRDVYRRALKEFAVIAMPFKERKFKRKGKKG</sequence>
<protein>
    <recommendedName>
        <fullName evidence="1">RNA pyrophosphohydrolase</fullName>
        <ecNumber evidence="1">3.6.1.-</ecNumber>
    </recommendedName>
    <alternativeName>
        <fullName evidence="1">(Di)nucleoside polyphosphate hydrolase</fullName>
    </alternativeName>
</protein>
<name>RPPH_ALIF1</name>